<dbReference type="EC" id="2.3.1.129" evidence="1"/>
<dbReference type="EMBL" id="CP000964">
    <property type="protein sequence ID" value="ACI06722.1"/>
    <property type="molecule type" value="Genomic_DNA"/>
</dbReference>
<dbReference type="SMR" id="B5Y1J0"/>
<dbReference type="KEGG" id="kpe:KPK_4539"/>
<dbReference type="HOGENOM" id="CLU_061249_0_0_6"/>
<dbReference type="UniPathway" id="UPA00359">
    <property type="reaction ID" value="UER00477"/>
</dbReference>
<dbReference type="Proteomes" id="UP000001734">
    <property type="component" value="Chromosome"/>
</dbReference>
<dbReference type="GO" id="GO:0005737">
    <property type="term" value="C:cytoplasm"/>
    <property type="evidence" value="ECO:0007669"/>
    <property type="project" value="UniProtKB-SubCell"/>
</dbReference>
<dbReference type="GO" id="GO:0016020">
    <property type="term" value="C:membrane"/>
    <property type="evidence" value="ECO:0007669"/>
    <property type="project" value="GOC"/>
</dbReference>
<dbReference type="GO" id="GO:0008780">
    <property type="term" value="F:acyl-[acyl-carrier-protein]-UDP-N-acetylglucosamine O-acyltransferase activity"/>
    <property type="evidence" value="ECO:0007669"/>
    <property type="project" value="UniProtKB-UniRule"/>
</dbReference>
<dbReference type="GO" id="GO:0009245">
    <property type="term" value="P:lipid A biosynthetic process"/>
    <property type="evidence" value="ECO:0007669"/>
    <property type="project" value="UniProtKB-UniRule"/>
</dbReference>
<dbReference type="CDD" id="cd03351">
    <property type="entry name" value="LbH_UDP-GlcNAc_AT"/>
    <property type="match status" value="1"/>
</dbReference>
<dbReference type="FunFam" id="1.20.1180.10:FF:000001">
    <property type="entry name" value="Acyl-[acyl-carrier-protein]--UDP-N-acetylglucosamine O-acyltransferase"/>
    <property type="match status" value="1"/>
</dbReference>
<dbReference type="FunFam" id="2.160.10.10:FF:000003">
    <property type="entry name" value="Acyl-[acyl-carrier-protein]--UDP-N-acetylglucosamine O-acyltransferase"/>
    <property type="match status" value="1"/>
</dbReference>
<dbReference type="Gene3D" id="2.160.10.10">
    <property type="entry name" value="Hexapeptide repeat proteins"/>
    <property type="match status" value="1"/>
</dbReference>
<dbReference type="Gene3D" id="1.20.1180.10">
    <property type="entry name" value="Udp N-acetylglucosamine O-acyltransferase, C-terminal domain"/>
    <property type="match status" value="1"/>
</dbReference>
<dbReference type="HAMAP" id="MF_00387">
    <property type="entry name" value="LpxA"/>
    <property type="match status" value="1"/>
</dbReference>
<dbReference type="InterPro" id="IPR029098">
    <property type="entry name" value="Acetyltransf_C"/>
</dbReference>
<dbReference type="InterPro" id="IPR037157">
    <property type="entry name" value="Acetyltransf_C_sf"/>
</dbReference>
<dbReference type="InterPro" id="IPR001451">
    <property type="entry name" value="Hexapep"/>
</dbReference>
<dbReference type="InterPro" id="IPR018357">
    <property type="entry name" value="Hexapep_transf_CS"/>
</dbReference>
<dbReference type="InterPro" id="IPR010137">
    <property type="entry name" value="Lipid_A_LpxA"/>
</dbReference>
<dbReference type="InterPro" id="IPR011004">
    <property type="entry name" value="Trimer_LpxA-like_sf"/>
</dbReference>
<dbReference type="NCBIfam" id="TIGR01852">
    <property type="entry name" value="lipid_A_lpxA"/>
    <property type="match status" value="1"/>
</dbReference>
<dbReference type="NCBIfam" id="NF003657">
    <property type="entry name" value="PRK05289.1"/>
    <property type="match status" value="1"/>
</dbReference>
<dbReference type="PANTHER" id="PTHR43480">
    <property type="entry name" value="ACYL-[ACYL-CARRIER-PROTEIN]--UDP-N-ACETYLGLUCOSAMINE O-ACYLTRANSFERASE"/>
    <property type="match status" value="1"/>
</dbReference>
<dbReference type="PANTHER" id="PTHR43480:SF1">
    <property type="entry name" value="ACYL-[ACYL-CARRIER-PROTEIN]--UDP-N-ACETYLGLUCOSAMINE O-ACYLTRANSFERASE, MITOCHONDRIAL-RELATED"/>
    <property type="match status" value="1"/>
</dbReference>
<dbReference type="Pfam" id="PF13720">
    <property type="entry name" value="Acetyltransf_11"/>
    <property type="match status" value="1"/>
</dbReference>
<dbReference type="Pfam" id="PF00132">
    <property type="entry name" value="Hexapep"/>
    <property type="match status" value="2"/>
</dbReference>
<dbReference type="PIRSF" id="PIRSF000456">
    <property type="entry name" value="UDP-GlcNAc_acltr"/>
    <property type="match status" value="1"/>
</dbReference>
<dbReference type="SUPFAM" id="SSF51161">
    <property type="entry name" value="Trimeric LpxA-like enzymes"/>
    <property type="match status" value="1"/>
</dbReference>
<dbReference type="PROSITE" id="PS00101">
    <property type="entry name" value="HEXAPEP_TRANSFERASES"/>
    <property type="match status" value="2"/>
</dbReference>
<gene>
    <name evidence="1" type="primary">lpxA</name>
    <name type="ordered locus">KPK_4539</name>
</gene>
<name>LPXA_KLEP3</name>
<comment type="function">
    <text evidence="1">Involved in the biosynthesis of lipid A, a phosphorylated glycolipid that anchors the lipopolysaccharide to the outer membrane of the cell.</text>
</comment>
<comment type="catalytic activity">
    <reaction evidence="1">
        <text>a (3R)-hydroxyacyl-[ACP] + UDP-N-acetyl-alpha-D-glucosamine = a UDP-3-O-[(3R)-3-hydroxyacyl]-N-acetyl-alpha-D-glucosamine + holo-[ACP]</text>
        <dbReference type="Rhea" id="RHEA:67812"/>
        <dbReference type="Rhea" id="RHEA-COMP:9685"/>
        <dbReference type="Rhea" id="RHEA-COMP:9945"/>
        <dbReference type="ChEBI" id="CHEBI:57705"/>
        <dbReference type="ChEBI" id="CHEBI:64479"/>
        <dbReference type="ChEBI" id="CHEBI:78827"/>
        <dbReference type="ChEBI" id="CHEBI:173225"/>
        <dbReference type="EC" id="2.3.1.129"/>
    </reaction>
</comment>
<comment type="pathway">
    <text evidence="1">Glycolipid biosynthesis; lipid IV(A) biosynthesis; lipid IV(A) from (3R)-3-hydroxytetradecanoyl-[acyl-carrier-protein] and UDP-N-acetyl-alpha-D-glucosamine: step 1/6.</text>
</comment>
<comment type="subunit">
    <text evidence="1">Homotrimer.</text>
</comment>
<comment type="subcellular location">
    <subcellularLocation>
        <location evidence="1">Cytoplasm</location>
    </subcellularLocation>
</comment>
<comment type="similarity">
    <text evidence="1">Belongs to the transferase hexapeptide repeat family. LpxA subfamily.</text>
</comment>
<reference key="1">
    <citation type="journal article" date="2008" name="PLoS Genet.">
        <title>Complete genome sequence of the N2-fixing broad host range endophyte Klebsiella pneumoniae 342 and virulence predictions verified in mice.</title>
        <authorList>
            <person name="Fouts D.E."/>
            <person name="Tyler H.L."/>
            <person name="DeBoy R.T."/>
            <person name="Daugherty S."/>
            <person name="Ren Q."/>
            <person name="Badger J.H."/>
            <person name="Durkin A.S."/>
            <person name="Huot H."/>
            <person name="Shrivastava S."/>
            <person name="Kothari S."/>
            <person name="Dodson R.J."/>
            <person name="Mohamoud Y."/>
            <person name="Khouri H."/>
            <person name="Roesch L.F.W."/>
            <person name="Krogfelt K.A."/>
            <person name="Struve C."/>
            <person name="Triplett E.W."/>
            <person name="Methe B.A."/>
        </authorList>
    </citation>
    <scope>NUCLEOTIDE SEQUENCE [LARGE SCALE GENOMIC DNA]</scope>
    <source>
        <strain>342</strain>
    </source>
</reference>
<protein>
    <recommendedName>
        <fullName evidence="1">Acyl-[acyl-carrier-protein]--UDP-N-acetylglucosamine O-acyltransferase</fullName>
        <shortName evidence="1">UDP-N-acetylglucosamine acyltransferase</shortName>
        <ecNumber evidence="1">2.3.1.129</ecNumber>
    </recommendedName>
</protein>
<sequence>MIDKTAFVHPTAIVEEGAVIGANVHIGPFCIVGANVEIGEGTVLKSHVVVNGHTKIGRDNEIYQFASIGEVNQDLKYAGEPTRVEIGDRNRIRESVTIHRGTVQGGGLTKVGNDNLLMINAHVAHDCTLGDRCILANNATLAGHVSLDDFVIIGGMTAVHQFCIIGAHVMVGGCSGVAQDVPPFVIAQGNHATPFGVNIEGLKRRGFSREAITAIRNAYKLLYRSGKTLDEAKPEIAELATQHPEVQPFVDFFARSTRGLIR</sequence>
<evidence type="ECO:0000255" key="1">
    <source>
        <dbReference type="HAMAP-Rule" id="MF_00387"/>
    </source>
</evidence>
<organism>
    <name type="scientific">Klebsiella pneumoniae (strain 342)</name>
    <dbReference type="NCBI Taxonomy" id="507522"/>
    <lineage>
        <taxon>Bacteria</taxon>
        <taxon>Pseudomonadati</taxon>
        <taxon>Pseudomonadota</taxon>
        <taxon>Gammaproteobacteria</taxon>
        <taxon>Enterobacterales</taxon>
        <taxon>Enterobacteriaceae</taxon>
        <taxon>Klebsiella/Raoultella group</taxon>
        <taxon>Klebsiella</taxon>
        <taxon>Klebsiella pneumoniae complex</taxon>
    </lineage>
</organism>
<proteinExistence type="inferred from homology"/>
<feature type="chain" id="PRO_1000122713" description="Acyl-[acyl-carrier-protein]--UDP-N-acetylglucosamine O-acyltransferase">
    <location>
        <begin position="1"/>
        <end position="262"/>
    </location>
</feature>
<keyword id="KW-0012">Acyltransferase</keyword>
<keyword id="KW-0963">Cytoplasm</keyword>
<keyword id="KW-0441">Lipid A biosynthesis</keyword>
<keyword id="KW-0444">Lipid biosynthesis</keyword>
<keyword id="KW-0443">Lipid metabolism</keyword>
<keyword id="KW-0677">Repeat</keyword>
<keyword id="KW-0808">Transferase</keyword>
<accession>B5Y1J0</accession>